<protein>
    <recommendedName>
        <fullName>Nitrogen fixation protein NifU</fullName>
    </recommendedName>
</protein>
<accession>Q43885</accession>
<feature type="chain" id="PRO_0000166171" description="Nitrogen fixation protein NifU">
    <location>
        <begin position="1"/>
        <end position="300"/>
    </location>
</feature>
<feature type="region of interest" description="Disordered" evidence="2">
    <location>
        <begin position="201"/>
        <end position="220"/>
    </location>
</feature>
<feature type="binding site" evidence="1">
    <location>
        <position position="145"/>
    </location>
    <ligand>
        <name>[2Fe-2S] cluster</name>
        <dbReference type="ChEBI" id="CHEBI:190135"/>
    </ligand>
</feature>
<feature type="binding site" evidence="1">
    <location>
        <position position="147"/>
    </location>
    <ligand>
        <name>[2Fe-2S] cluster</name>
        <dbReference type="ChEBI" id="CHEBI:190135"/>
    </ligand>
</feature>
<feature type="binding site" evidence="1">
    <location>
        <position position="180"/>
    </location>
    <ligand>
        <name>[2Fe-2S] cluster</name>
        <dbReference type="ChEBI" id="CHEBI:190135"/>
    </ligand>
</feature>
<feature type="binding site" evidence="1">
    <location>
        <position position="183"/>
    </location>
    <ligand>
        <name>[2Fe-2S] cluster</name>
        <dbReference type="ChEBI" id="CHEBI:190135"/>
    </ligand>
</feature>
<gene>
    <name type="primary">nifU</name>
</gene>
<evidence type="ECO:0000250" key="1">
    <source>
        <dbReference type="UniProtKB" id="P05340"/>
    </source>
</evidence>
<evidence type="ECO:0000256" key="2">
    <source>
        <dbReference type="SAM" id="MobiDB-lite"/>
    </source>
</evidence>
<evidence type="ECO:0000305" key="3"/>
<sequence length="300" mass="32120">MWDYTDKVLELFYDPKNQGVIEDNGEPGVKVATGEVGSIACGDALRLHIKVEVESDKIVDSRFQTFGCTSAIASSSALTEMIKGLTLDEALKVSNKDIADYLGGLPEAKMHCSVMGQEALEAAIYNYRGIPLATHDDEDEGALVCTCFGVSENKVRRIVIENDLTSAEQVTNYIKAGGGCGSCLAKIDDIIKDVKENKAATNLNNKGGSKPTNIPNSGQKRPLTNVQKIALIQKVLDEEVRPVLIADGGDVELYDVDGDIVKVVLQGACGSCSSSTATLKIAIESRLRDRINPSLVVEAV</sequence>
<organism>
    <name type="scientific">Trichormus azollae</name>
    <name type="common">Anabaena azollae</name>
    <dbReference type="NCBI Taxonomy" id="1164"/>
    <lineage>
        <taxon>Bacteria</taxon>
        <taxon>Bacillati</taxon>
        <taxon>Cyanobacteriota</taxon>
        <taxon>Cyanophyceae</taxon>
        <taxon>Nostocales</taxon>
        <taxon>Nostocaceae</taxon>
        <taxon>Trichormus</taxon>
    </lineage>
</organism>
<reference key="1">
    <citation type="journal article" date="1995" name="Microbiology">
        <title>Characterization of a nitrogen-fixation (nif) gene cluster from Anabaena azollae 1a shows that closely related cyanobacteria have highly variable but structured intergenic regions.</title>
        <authorList>
            <person name="Jackman D.M."/>
            <person name="Mulligan M.E."/>
        </authorList>
    </citation>
    <scope>NUCLEOTIDE SEQUENCE [GENOMIC DNA]</scope>
    <source>
        <strain>1a</strain>
    </source>
</reference>
<comment type="function">
    <text evidence="3">May be involved in the formation or repair of [Fe-S] clusters present in iron-sulfur proteins.</text>
</comment>
<comment type="cofactor">
    <cofactor evidence="1">
        <name>[2Fe-2S] cluster</name>
        <dbReference type="ChEBI" id="CHEBI:190135"/>
    </cofactor>
    <text evidence="1">Binds 1 [2Fe-2S] cluster per subunit.</text>
</comment>
<comment type="similarity">
    <text evidence="3">Belongs to the NifU family.</text>
</comment>
<keyword id="KW-0001">2Fe-2S</keyword>
<keyword id="KW-0408">Iron</keyword>
<keyword id="KW-0411">Iron-sulfur</keyword>
<keyword id="KW-0479">Metal-binding</keyword>
<keyword id="KW-0535">Nitrogen fixation</keyword>
<name>NIFU_TRIAZ</name>
<proteinExistence type="inferred from homology"/>
<dbReference type="EMBL" id="L34879">
    <property type="protein sequence ID" value="AAA87250.1"/>
    <property type="molecule type" value="Genomic_DNA"/>
</dbReference>
<dbReference type="SMR" id="Q43885"/>
<dbReference type="GO" id="GO:0051537">
    <property type="term" value="F:2 iron, 2 sulfur cluster binding"/>
    <property type="evidence" value="ECO:0007669"/>
    <property type="project" value="UniProtKB-KW"/>
</dbReference>
<dbReference type="GO" id="GO:0005506">
    <property type="term" value="F:iron ion binding"/>
    <property type="evidence" value="ECO:0007669"/>
    <property type="project" value="InterPro"/>
</dbReference>
<dbReference type="GO" id="GO:0016226">
    <property type="term" value="P:iron-sulfur cluster assembly"/>
    <property type="evidence" value="ECO:0007669"/>
    <property type="project" value="InterPro"/>
</dbReference>
<dbReference type="GO" id="GO:0009399">
    <property type="term" value="P:nitrogen fixation"/>
    <property type="evidence" value="ECO:0007669"/>
    <property type="project" value="UniProtKB-KW"/>
</dbReference>
<dbReference type="CDD" id="cd06664">
    <property type="entry name" value="IscU_like"/>
    <property type="match status" value="1"/>
</dbReference>
<dbReference type="CDD" id="cd19947">
    <property type="entry name" value="NifU_Fer2_BFD-like"/>
    <property type="match status" value="1"/>
</dbReference>
<dbReference type="Gene3D" id="3.90.1010.10">
    <property type="match status" value="1"/>
</dbReference>
<dbReference type="Gene3D" id="1.10.10.1100">
    <property type="entry name" value="BFD-like [2Fe-2S]-binding domain"/>
    <property type="match status" value="1"/>
</dbReference>
<dbReference type="Gene3D" id="3.30.300.130">
    <property type="entry name" value="Fe-S cluster assembly (FSCA)"/>
    <property type="match status" value="1"/>
</dbReference>
<dbReference type="InterPro" id="IPR007419">
    <property type="entry name" value="BFD-like_2Fe2S-bd_dom"/>
</dbReference>
<dbReference type="InterPro" id="IPR041854">
    <property type="entry name" value="BFD-like_2Fe2S-bd_dom_sf"/>
</dbReference>
<dbReference type="InterPro" id="IPR034904">
    <property type="entry name" value="FSCA_dom_sf"/>
</dbReference>
<dbReference type="InterPro" id="IPR016217">
    <property type="entry name" value="N_fixation_NifU"/>
</dbReference>
<dbReference type="InterPro" id="IPR010238">
    <property type="entry name" value="NIF_FeS_clus_asmbl_NifU"/>
</dbReference>
<dbReference type="InterPro" id="IPR001075">
    <property type="entry name" value="NIF_FeS_clus_asmbl_NifU_C"/>
</dbReference>
<dbReference type="InterPro" id="IPR002871">
    <property type="entry name" value="NIF_FeS_clus_asmbl_NifU_N"/>
</dbReference>
<dbReference type="NCBIfam" id="TIGR02000">
    <property type="entry name" value="NifU_proper"/>
    <property type="match status" value="1"/>
</dbReference>
<dbReference type="PANTHER" id="PTHR10093">
    <property type="entry name" value="IRON-SULFUR CLUSTER ASSEMBLY ENZYME NIFU HOMOLOG"/>
    <property type="match status" value="1"/>
</dbReference>
<dbReference type="Pfam" id="PF04324">
    <property type="entry name" value="Fer2_BFD"/>
    <property type="match status" value="1"/>
</dbReference>
<dbReference type="Pfam" id="PF01106">
    <property type="entry name" value="NifU"/>
    <property type="match status" value="1"/>
</dbReference>
<dbReference type="Pfam" id="PF01592">
    <property type="entry name" value="NifU_N"/>
    <property type="match status" value="1"/>
</dbReference>
<dbReference type="PIRSF" id="PIRSF000375">
    <property type="entry name" value="NifU"/>
    <property type="match status" value="1"/>
</dbReference>
<dbReference type="SUPFAM" id="SSF117916">
    <property type="entry name" value="Fe-S cluster assembly (FSCA) domain-like"/>
    <property type="match status" value="1"/>
</dbReference>
<dbReference type="SUPFAM" id="SSF82649">
    <property type="entry name" value="SufE/NifU"/>
    <property type="match status" value="1"/>
</dbReference>